<sequence length="274" mass="30905">MAHYFVGDIQGCFEELQLLLNNVDFNPSKDQLWAVGDLVARGPGSLETLRYFRQLEGSGRVVLGNHDLHLLAVNAKIKRANPNDKLGPLLTAPDIGSLIDWLRMQPLYQELPEHNLVMTHAGVPPQWSLETLREEADHVAAALRSDDYLTSLICHMYTNGSNCWHDSMSELERKIYCINALTRMRFLHSDGRLDFDCKLPPSACEDPDLSPWFEHSGLLNSTHTLVFGHWAAVMGKVPSSTIHALDTGCCWGEHLTLWHLESNQKITQNKLKKS</sequence>
<comment type="function">
    <text evidence="1">Hydrolyzes diadenosine 5',5'''-P1,P4-tetraphosphate to yield ADP.</text>
</comment>
<comment type="catalytic activity">
    <reaction evidence="1">
        <text>P(1),P(4)-bis(5'-adenosyl) tetraphosphate + H2O = 2 ADP + 2 H(+)</text>
        <dbReference type="Rhea" id="RHEA:24252"/>
        <dbReference type="ChEBI" id="CHEBI:15377"/>
        <dbReference type="ChEBI" id="CHEBI:15378"/>
        <dbReference type="ChEBI" id="CHEBI:58141"/>
        <dbReference type="ChEBI" id="CHEBI:456216"/>
        <dbReference type="EC" id="3.6.1.41"/>
    </reaction>
</comment>
<comment type="similarity">
    <text evidence="1">Belongs to the Ap4A hydrolase family.</text>
</comment>
<organism>
    <name type="scientific">Shewanella sediminis (strain HAW-EB3)</name>
    <dbReference type="NCBI Taxonomy" id="425104"/>
    <lineage>
        <taxon>Bacteria</taxon>
        <taxon>Pseudomonadati</taxon>
        <taxon>Pseudomonadota</taxon>
        <taxon>Gammaproteobacteria</taxon>
        <taxon>Alteromonadales</taxon>
        <taxon>Shewanellaceae</taxon>
        <taxon>Shewanella</taxon>
    </lineage>
</organism>
<name>APAH_SHESH</name>
<accession>A8FRV0</accession>
<keyword id="KW-0378">Hydrolase</keyword>
<keyword id="KW-1185">Reference proteome</keyword>
<protein>
    <recommendedName>
        <fullName evidence="1">Bis(5'-nucleosyl)-tetraphosphatase, symmetrical</fullName>
        <ecNumber evidence="1">3.6.1.41</ecNumber>
    </recommendedName>
    <alternativeName>
        <fullName evidence="1">Ap4A hydrolase</fullName>
    </alternativeName>
    <alternativeName>
        <fullName evidence="1">Diadenosine 5',5'''-P1,P4-tetraphosphate pyrophosphohydrolase</fullName>
    </alternativeName>
    <alternativeName>
        <fullName evidence="1">Diadenosine tetraphosphatase</fullName>
    </alternativeName>
</protein>
<feature type="chain" id="PRO_1000077721" description="Bis(5'-nucleosyl)-tetraphosphatase, symmetrical">
    <location>
        <begin position="1"/>
        <end position="274"/>
    </location>
</feature>
<gene>
    <name evidence="1" type="primary">apaH</name>
    <name type="ordered locus">Ssed_0962</name>
</gene>
<reference key="1">
    <citation type="submission" date="2007-08" db="EMBL/GenBank/DDBJ databases">
        <title>Complete sequence of Shewanella sediminis HAW-EB3.</title>
        <authorList>
            <consortium name="US DOE Joint Genome Institute"/>
            <person name="Copeland A."/>
            <person name="Lucas S."/>
            <person name="Lapidus A."/>
            <person name="Barry K."/>
            <person name="Glavina del Rio T."/>
            <person name="Dalin E."/>
            <person name="Tice H."/>
            <person name="Pitluck S."/>
            <person name="Chertkov O."/>
            <person name="Brettin T."/>
            <person name="Bruce D."/>
            <person name="Detter J.C."/>
            <person name="Han C."/>
            <person name="Schmutz J."/>
            <person name="Larimer F."/>
            <person name="Land M."/>
            <person name="Hauser L."/>
            <person name="Kyrpides N."/>
            <person name="Kim E."/>
            <person name="Zhao J.-S."/>
            <person name="Richardson P."/>
        </authorList>
    </citation>
    <scope>NUCLEOTIDE SEQUENCE [LARGE SCALE GENOMIC DNA]</scope>
    <source>
        <strain>HAW-EB3</strain>
    </source>
</reference>
<evidence type="ECO:0000255" key="1">
    <source>
        <dbReference type="HAMAP-Rule" id="MF_00199"/>
    </source>
</evidence>
<proteinExistence type="inferred from homology"/>
<dbReference type="EC" id="3.6.1.41" evidence="1"/>
<dbReference type="EMBL" id="CP000821">
    <property type="protein sequence ID" value="ABV35573.1"/>
    <property type="molecule type" value="Genomic_DNA"/>
</dbReference>
<dbReference type="RefSeq" id="WP_012141309.1">
    <property type="nucleotide sequence ID" value="NC_009831.1"/>
</dbReference>
<dbReference type="SMR" id="A8FRV0"/>
<dbReference type="STRING" id="425104.Ssed_0962"/>
<dbReference type="KEGG" id="sse:Ssed_0962"/>
<dbReference type="eggNOG" id="COG0639">
    <property type="taxonomic scope" value="Bacteria"/>
</dbReference>
<dbReference type="HOGENOM" id="CLU_056184_2_0_6"/>
<dbReference type="OrthoDB" id="9807890at2"/>
<dbReference type="Proteomes" id="UP000002015">
    <property type="component" value="Chromosome"/>
</dbReference>
<dbReference type="GO" id="GO:0008803">
    <property type="term" value="F:bis(5'-nucleosyl)-tetraphosphatase (symmetrical) activity"/>
    <property type="evidence" value="ECO:0007669"/>
    <property type="project" value="UniProtKB-UniRule"/>
</dbReference>
<dbReference type="CDD" id="cd07422">
    <property type="entry name" value="MPP_ApaH"/>
    <property type="match status" value="1"/>
</dbReference>
<dbReference type="Gene3D" id="3.60.21.10">
    <property type="match status" value="1"/>
</dbReference>
<dbReference type="HAMAP" id="MF_00199">
    <property type="entry name" value="ApaH"/>
    <property type="match status" value="1"/>
</dbReference>
<dbReference type="InterPro" id="IPR004617">
    <property type="entry name" value="ApaH"/>
</dbReference>
<dbReference type="InterPro" id="IPR004843">
    <property type="entry name" value="Calcineurin-like_PHP_ApaH"/>
</dbReference>
<dbReference type="InterPro" id="IPR029052">
    <property type="entry name" value="Metallo-depent_PP-like"/>
</dbReference>
<dbReference type="NCBIfam" id="TIGR00668">
    <property type="entry name" value="apaH"/>
    <property type="match status" value="1"/>
</dbReference>
<dbReference type="NCBIfam" id="NF001204">
    <property type="entry name" value="PRK00166.1"/>
    <property type="match status" value="1"/>
</dbReference>
<dbReference type="PANTHER" id="PTHR40942">
    <property type="match status" value="1"/>
</dbReference>
<dbReference type="PANTHER" id="PTHR40942:SF4">
    <property type="entry name" value="CYTOCHROME C5"/>
    <property type="match status" value="1"/>
</dbReference>
<dbReference type="Pfam" id="PF00149">
    <property type="entry name" value="Metallophos"/>
    <property type="match status" value="1"/>
</dbReference>
<dbReference type="PIRSF" id="PIRSF000903">
    <property type="entry name" value="B5n-ttraPtase_sm"/>
    <property type="match status" value="1"/>
</dbReference>
<dbReference type="SUPFAM" id="SSF56300">
    <property type="entry name" value="Metallo-dependent phosphatases"/>
    <property type="match status" value="1"/>
</dbReference>